<dbReference type="EC" id="3.6.5.n1" evidence="1"/>
<dbReference type="EMBL" id="CP001191">
    <property type="protein sequence ID" value="ACI57514.1"/>
    <property type="molecule type" value="Genomic_DNA"/>
</dbReference>
<dbReference type="RefSeq" id="WP_012559632.1">
    <property type="nucleotide sequence ID" value="NC_011369.1"/>
</dbReference>
<dbReference type="SMR" id="B5ZXQ5"/>
<dbReference type="STRING" id="395492.Rleg2_4255"/>
<dbReference type="KEGG" id="rlt:Rleg2_4255"/>
<dbReference type="eggNOG" id="COG0481">
    <property type="taxonomic scope" value="Bacteria"/>
</dbReference>
<dbReference type="HOGENOM" id="CLU_009995_3_3_5"/>
<dbReference type="Proteomes" id="UP000008330">
    <property type="component" value="Chromosome"/>
</dbReference>
<dbReference type="GO" id="GO:0005886">
    <property type="term" value="C:plasma membrane"/>
    <property type="evidence" value="ECO:0007669"/>
    <property type="project" value="UniProtKB-SubCell"/>
</dbReference>
<dbReference type="GO" id="GO:0005525">
    <property type="term" value="F:GTP binding"/>
    <property type="evidence" value="ECO:0007669"/>
    <property type="project" value="UniProtKB-UniRule"/>
</dbReference>
<dbReference type="GO" id="GO:0003924">
    <property type="term" value="F:GTPase activity"/>
    <property type="evidence" value="ECO:0007669"/>
    <property type="project" value="UniProtKB-UniRule"/>
</dbReference>
<dbReference type="GO" id="GO:0097216">
    <property type="term" value="F:guanosine tetraphosphate binding"/>
    <property type="evidence" value="ECO:0007669"/>
    <property type="project" value="UniProtKB-ARBA"/>
</dbReference>
<dbReference type="GO" id="GO:0043022">
    <property type="term" value="F:ribosome binding"/>
    <property type="evidence" value="ECO:0007669"/>
    <property type="project" value="UniProtKB-UniRule"/>
</dbReference>
<dbReference type="GO" id="GO:0003746">
    <property type="term" value="F:translation elongation factor activity"/>
    <property type="evidence" value="ECO:0007669"/>
    <property type="project" value="UniProtKB-UniRule"/>
</dbReference>
<dbReference type="GO" id="GO:0045727">
    <property type="term" value="P:positive regulation of translation"/>
    <property type="evidence" value="ECO:0007669"/>
    <property type="project" value="UniProtKB-UniRule"/>
</dbReference>
<dbReference type="CDD" id="cd03699">
    <property type="entry name" value="EF4_II"/>
    <property type="match status" value="1"/>
</dbReference>
<dbReference type="CDD" id="cd16260">
    <property type="entry name" value="EF4_III"/>
    <property type="match status" value="1"/>
</dbReference>
<dbReference type="CDD" id="cd01890">
    <property type="entry name" value="LepA"/>
    <property type="match status" value="1"/>
</dbReference>
<dbReference type="CDD" id="cd03709">
    <property type="entry name" value="lepA_C"/>
    <property type="match status" value="1"/>
</dbReference>
<dbReference type="FunFam" id="3.40.50.300:FF:000078">
    <property type="entry name" value="Elongation factor 4"/>
    <property type="match status" value="1"/>
</dbReference>
<dbReference type="FunFam" id="2.40.30.10:FF:000015">
    <property type="entry name" value="Translation factor GUF1, mitochondrial"/>
    <property type="match status" value="1"/>
</dbReference>
<dbReference type="FunFam" id="3.30.70.240:FF:000007">
    <property type="entry name" value="Translation factor GUF1, mitochondrial"/>
    <property type="match status" value="1"/>
</dbReference>
<dbReference type="FunFam" id="3.30.70.2570:FF:000001">
    <property type="entry name" value="Translation factor GUF1, mitochondrial"/>
    <property type="match status" value="1"/>
</dbReference>
<dbReference type="FunFam" id="3.30.70.870:FF:000004">
    <property type="entry name" value="Translation factor GUF1, mitochondrial"/>
    <property type="match status" value="1"/>
</dbReference>
<dbReference type="Gene3D" id="3.30.70.240">
    <property type="match status" value="1"/>
</dbReference>
<dbReference type="Gene3D" id="3.30.70.2570">
    <property type="entry name" value="Elongation factor 4, C-terminal domain"/>
    <property type="match status" value="1"/>
</dbReference>
<dbReference type="Gene3D" id="3.30.70.870">
    <property type="entry name" value="Elongation Factor G (Translational Gtpase), domain 3"/>
    <property type="match status" value="1"/>
</dbReference>
<dbReference type="Gene3D" id="3.40.50.300">
    <property type="entry name" value="P-loop containing nucleotide triphosphate hydrolases"/>
    <property type="match status" value="1"/>
</dbReference>
<dbReference type="Gene3D" id="2.40.30.10">
    <property type="entry name" value="Translation factors"/>
    <property type="match status" value="1"/>
</dbReference>
<dbReference type="HAMAP" id="MF_00071">
    <property type="entry name" value="LepA"/>
    <property type="match status" value="1"/>
</dbReference>
<dbReference type="InterPro" id="IPR006297">
    <property type="entry name" value="EF-4"/>
</dbReference>
<dbReference type="InterPro" id="IPR035647">
    <property type="entry name" value="EFG_III/V"/>
</dbReference>
<dbReference type="InterPro" id="IPR000640">
    <property type="entry name" value="EFG_V-like"/>
</dbReference>
<dbReference type="InterPro" id="IPR004161">
    <property type="entry name" value="EFTu-like_2"/>
</dbReference>
<dbReference type="InterPro" id="IPR031157">
    <property type="entry name" value="G_TR_CS"/>
</dbReference>
<dbReference type="InterPro" id="IPR038363">
    <property type="entry name" value="LepA_C_sf"/>
</dbReference>
<dbReference type="InterPro" id="IPR013842">
    <property type="entry name" value="LepA_CTD"/>
</dbReference>
<dbReference type="InterPro" id="IPR035654">
    <property type="entry name" value="LepA_IV"/>
</dbReference>
<dbReference type="InterPro" id="IPR027417">
    <property type="entry name" value="P-loop_NTPase"/>
</dbReference>
<dbReference type="InterPro" id="IPR005225">
    <property type="entry name" value="Small_GTP-bd"/>
</dbReference>
<dbReference type="InterPro" id="IPR000795">
    <property type="entry name" value="T_Tr_GTP-bd_dom"/>
</dbReference>
<dbReference type="NCBIfam" id="TIGR01393">
    <property type="entry name" value="lepA"/>
    <property type="match status" value="1"/>
</dbReference>
<dbReference type="NCBIfam" id="TIGR00231">
    <property type="entry name" value="small_GTP"/>
    <property type="match status" value="1"/>
</dbReference>
<dbReference type="PANTHER" id="PTHR43512:SF4">
    <property type="entry name" value="TRANSLATION FACTOR GUF1 HOMOLOG, CHLOROPLASTIC"/>
    <property type="match status" value="1"/>
</dbReference>
<dbReference type="PANTHER" id="PTHR43512">
    <property type="entry name" value="TRANSLATION FACTOR GUF1-RELATED"/>
    <property type="match status" value="1"/>
</dbReference>
<dbReference type="Pfam" id="PF00679">
    <property type="entry name" value="EFG_C"/>
    <property type="match status" value="1"/>
</dbReference>
<dbReference type="Pfam" id="PF00009">
    <property type="entry name" value="GTP_EFTU"/>
    <property type="match status" value="1"/>
</dbReference>
<dbReference type="Pfam" id="PF03144">
    <property type="entry name" value="GTP_EFTU_D2"/>
    <property type="match status" value="1"/>
</dbReference>
<dbReference type="Pfam" id="PF06421">
    <property type="entry name" value="LepA_C"/>
    <property type="match status" value="1"/>
</dbReference>
<dbReference type="PRINTS" id="PR00315">
    <property type="entry name" value="ELONGATNFCT"/>
</dbReference>
<dbReference type="SUPFAM" id="SSF54980">
    <property type="entry name" value="EF-G C-terminal domain-like"/>
    <property type="match status" value="2"/>
</dbReference>
<dbReference type="SUPFAM" id="SSF52540">
    <property type="entry name" value="P-loop containing nucleoside triphosphate hydrolases"/>
    <property type="match status" value="1"/>
</dbReference>
<dbReference type="PROSITE" id="PS00301">
    <property type="entry name" value="G_TR_1"/>
    <property type="match status" value="1"/>
</dbReference>
<dbReference type="PROSITE" id="PS51722">
    <property type="entry name" value="G_TR_2"/>
    <property type="match status" value="1"/>
</dbReference>
<sequence length="610" mass="67396">MARMSTNSTTPLSHIRNFSIVAHIDHGKSTLADRLIQTTGGLAEREMSEQVLDNMDIERERGITIKAQTVRLHYQANNGEKYILNLIDTPGHVDFAYEVSRSLSACEGSLLVVDASQGVEAQTLANVYQAIDNNHELVTVLNKIDLPAAEPDRIKEQIEEVIGIDASEAVLISAKTGLGIPDVLEAIVNRLPAPKSPGGDKAPLKALLVDSWYDTYLGVMVLVRIIDGVLTKGQTIRMMGTDAKYQVERVGVLTPKMVNVDSLGPGEIGFITASIKEVADTRVGDTITEDKRPTAQALPGFKPAQPVVFCGLFPVDAADFEDLRAAMGKLRLNDASFSFEMESSAALGFGFRCGFLGLLHLEIIQERLEREFDLDLIATAPSVVYKMFMTDGSERELHNPADMPDVVKISEIHEPWIRATILTPDDYLGGILKLCQDRRGIQIELTYVGTRAMLTYDLPLNEVVFDFYDRLKSISKGYASFDYTLTDHREGNLVKMSILVNGEPVDALSMMVHRTAAEKRGRDMCEKLKELIPKHMFKIPIQAAIGGNVIARETISALRKDVTAKCYGGDATRKRKLLDKQKAGKKRMRQFGKVEIPQEAFIAALKMGDE</sequence>
<organism>
    <name type="scientific">Rhizobium leguminosarum bv. trifolii (strain WSM2304)</name>
    <dbReference type="NCBI Taxonomy" id="395492"/>
    <lineage>
        <taxon>Bacteria</taxon>
        <taxon>Pseudomonadati</taxon>
        <taxon>Pseudomonadota</taxon>
        <taxon>Alphaproteobacteria</taxon>
        <taxon>Hyphomicrobiales</taxon>
        <taxon>Rhizobiaceae</taxon>
        <taxon>Rhizobium/Agrobacterium group</taxon>
        <taxon>Rhizobium</taxon>
    </lineage>
</organism>
<comment type="function">
    <text evidence="1">Required for accurate and efficient protein synthesis under certain stress conditions. May act as a fidelity factor of the translation reaction, by catalyzing a one-codon backward translocation of tRNAs on improperly translocated ribosomes. Back-translocation proceeds from a post-translocation (POST) complex to a pre-translocation (PRE) complex, thus giving elongation factor G a second chance to translocate the tRNAs correctly. Binds to ribosomes in a GTP-dependent manner.</text>
</comment>
<comment type="catalytic activity">
    <reaction evidence="1">
        <text>GTP + H2O = GDP + phosphate + H(+)</text>
        <dbReference type="Rhea" id="RHEA:19669"/>
        <dbReference type="ChEBI" id="CHEBI:15377"/>
        <dbReference type="ChEBI" id="CHEBI:15378"/>
        <dbReference type="ChEBI" id="CHEBI:37565"/>
        <dbReference type="ChEBI" id="CHEBI:43474"/>
        <dbReference type="ChEBI" id="CHEBI:58189"/>
        <dbReference type="EC" id="3.6.5.n1"/>
    </reaction>
</comment>
<comment type="subcellular location">
    <subcellularLocation>
        <location evidence="1">Cell inner membrane</location>
        <topology evidence="1">Peripheral membrane protein</topology>
        <orientation evidence="1">Cytoplasmic side</orientation>
    </subcellularLocation>
</comment>
<comment type="similarity">
    <text evidence="1">Belongs to the TRAFAC class translation factor GTPase superfamily. Classic translation factor GTPase family. LepA subfamily.</text>
</comment>
<proteinExistence type="inferred from homology"/>
<gene>
    <name evidence="1" type="primary">lepA</name>
    <name type="ordered locus">Rleg2_4255</name>
</gene>
<accession>B5ZXQ5</accession>
<reference key="1">
    <citation type="journal article" date="2010" name="Stand. Genomic Sci.">
        <title>Complete genome sequence of Rhizobium leguminosarum bv trifolii strain WSM2304, an effective microsymbiont of the South American clover Trifolium polymorphum.</title>
        <authorList>
            <person name="Reeve W."/>
            <person name="O'Hara G."/>
            <person name="Chain P."/>
            <person name="Ardley J."/>
            <person name="Brau L."/>
            <person name="Nandesena K."/>
            <person name="Tiwari R."/>
            <person name="Malfatti S."/>
            <person name="Kiss H."/>
            <person name="Lapidus A."/>
            <person name="Copeland A."/>
            <person name="Nolan M."/>
            <person name="Land M."/>
            <person name="Ivanova N."/>
            <person name="Mavromatis K."/>
            <person name="Markowitz V."/>
            <person name="Kyrpides N."/>
            <person name="Melino V."/>
            <person name="Denton M."/>
            <person name="Yates R."/>
            <person name="Howieson J."/>
        </authorList>
    </citation>
    <scope>NUCLEOTIDE SEQUENCE [LARGE SCALE GENOMIC DNA]</scope>
    <source>
        <strain>WSM2304</strain>
    </source>
</reference>
<evidence type="ECO:0000255" key="1">
    <source>
        <dbReference type="HAMAP-Rule" id="MF_00071"/>
    </source>
</evidence>
<feature type="chain" id="PRO_1000092433" description="Elongation factor 4">
    <location>
        <begin position="1"/>
        <end position="610"/>
    </location>
</feature>
<feature type="domain" description="tr-type G">
    <location>
        <begin position="13"/>
        <end position="195"/>
    </location>
</feature>
<feature type="binding site" evidence="1">
    <location>
        <begin position="25"/>
        <end position="30"/>
    </location>
    <ligand>
        <name>GTP</name>
        <dbReference type="ChEBI" id="CHEBI:37565"/>
    </ligand>
</feature>
<feature type="binding site" evidence="1">
    <location>
        <begin position="142"/>
        <end position="145"/>
    </location>
    <ligand>
        <name>GTP</name>
        <dbReference type="ChEBI" id="CHEBI:37565"/>
    </ligand>
</feature>
<keyword id="KW-0997">Cell inner membrane</keyword>
<keyword id="KW-1003">Cell membrane</keyword>
<keyword id="KW-0342">GTP-binding</keyword>
<keyword id="KW-0378">Hydrolase</keyword>
<keyword id="KW-0472">Membrane</keyword>
<keyword id="KW-0547">Nucleotide-binding</keyword>
<keyword id="KW-0648">Protein biosynthesis</keyword>
<keyword id="KW-1185">Reference proteome</keyword>
<name>LEPA_RHILW</name>
<protein>
    <recommendedName>
        <fullName evidence="1">Elongation factor 4</fullName>
        <shortName evidence="1">EF-4</shortName>
        <ecNumber evidence="1">3.6.5.n1</ecNumber>
    </recommendedName>
    <alternativeName>
        <fullName evidence="1">Ribosomal back-translocase LepA</fullName>
    </alternativeName>
</protein>